<proteinExistence type="inferred from homology"/>
<feature type="chain" id="PRO_1000062791" description="Undecaprenyl-diphosphatase">
    <location>
        <begin position="1"/>
        <end position="264"/>
    </location>
</feature>
<feature type="transmembrane region" description="Helical" evidence="1">
    <location>
        <begin position="1"/>
        <end position="21"/>
    </location>
</feature>
<feature type="transmembrane region" description="Helical" evidence="1">
    <location>
        <begin position="39"/>
        <end position="59"/>
    </location>
</feature>
<feature type="transmembrane region" description="Helical" evidence="1">
    <location>
        <begin position="83"/>
        <end position="103"/>
    </location>
</feature>
<feature type="transmembrane region" description="Helical" evidence="1">
    <location>
        <begin position="113"/>
        <end position="133"/>
    </location>
</feature>
<feature type="transmembrane region" description="Helical" evidence="1">
    <location>
        <begin position="143"/>
        <end position="163"/>
    </location>
</feature>
<feature type="transmembrane region" description="Helical" evidence="1">
    <location>
        <begin position="181"/>
        <end position="201"/>
    </location>
</feature>
<feature type="transmembrane region" description="Helical" evidence="1">
    <location>
        <begin position="220"/>
        <end position="240"/>
    </location>
</feature>
<feature type="transmembrane region" description="Helical" evidence="1">
    <location>
        <begin position="244"/>
        <end position="264"/>
    </location>
</feature>
<keyword id="KW-0046">Antibiotic resistance</keyword>
<keyword id="KW-0997">Cell inner membrane</keyword>
<keyword id="KW-1003">Cell membrane</keyword>
<keyword id="KW-0133">Cell shape</keyword>
<keyword id="KW-0961">Cell wall biogenesis/degradation</keyword>
<keyword id="KW-0378">Hydrolase</keyword>
<keyword id="KW-0472">Membrane</keyword>
<keyword id="KW-0573">Peptidoglycan synthesis</keyword>
<keyword id="KW-1185">Reference proteome</keyword>
<keyword id="KW-0812">Transmembrane</keyword>
<keyword id="KW-1133">Transmembrane helix</keyword>
<gene>
    <name evidence="1" type="primary">uppP</name>
    <name type="ordered locus">Ccur92_18150</name>
    <name type="ORF">CCV52592_0067</name>
</gene>
<reference key="1">
    <citation type="submission" date="2007-07" db="EMBL/GenBank/DDBJ databases">
        <title>Genome sequence of Campylobacter curvus 525.92 isolated from human feces.</title>
        <authorList>
            <person name="Fouts D.E."/>
            <person name="Mongodin E.F."/>
            <person name="Puiu D."/>
            <person name="Sebastian Y."/>
            <person name="Miller W.G."/>
            <person name="Mandrell R.E."/>
            <person name="Lastovica A.J."/>
            <person name="Nelson K.E."/>
        </authorList>
    </citation>
    <scope>NUCLEOTIDE SEQUENCE [LARGE SCALE GENOMIC DNA]</scope>
    <source>
        <strain>525.92</strain>
    </source>
</reference>
<dbReference type="EC" id="3.6.1.27" evidence="1"/>
<dbReference type="EMBL" id="CP000767">
    <property type="protein sequence ID" value="EAU00352.1"/>
    <property type="molecule type" value="Genomic_DNA"/>
</dbReference>
<dbReference type="RefSeq" id="WP_011992839.1">
    <property type="nucleotide sequence ID" value="NC_009715.2"/>
</dbReference>
<dbReference type="SMR" id="A7H0X7"/>
<dbReference type="STRING" id="360105.CCV52592_0067"/>
<dbReference type="KEGG" id="ccv:CCV52592_0067"/>
<dbReference type="HOGENOM" id="CLU_060296_1_0_7"/>
<dbReference type="OrthoDB" id="9808289at2"/>
<dbReference type="Proteomes" id="UP000006380">
    <property type="component" value="Chromosome"/>
</dbReference>
<dbReference type="GO" id="GO:0005886">
    <property type="term" value="C:plasma membrane"/>
    <property type="evidence" value="ECO:0007669"/>
    <property type="project" value="UniProtKB-SubCell"/>
</dbReference>
<dbReference type="GO" id="GO:0050380">
    <property type="term" value="F:undecaprenyl-diphosphatase activity"/>
    <property type="evidence" value="ECO:0007669"/>
    <property type="project" value="UniProtKB-UniRule"/>
</dbReference>
<dbReference type="GO" id="GO:0071555">
    <property type="term" value="P:cell wall organization"/>
    <property type="evidence" value="ECO:0007669"/>
    <property type="project" value="UniProtKB-KW"/>
</dbReference>
<dbReference type="GO" id="GO:0009252">
    <property type="term" value="P:peptidoglycan biosynthetic process"/>
    <property type="evidence" value="ECO:0007669"/>
    <property type="project" value="UniProtKB-KW"/>
</dbReference>
<dbReference type="GO" id="GO:0008360">
    <property type="term" value="P:regulation of cell shape"/>
    <property type="evidence" value="ECO:0007669"/>
    <property type="project" value="UniProtKB-KW"/>
</dbReference>
<dbReference type="GO" id="GO:0046677">
    <property type="term" value="P:response to antibiotic"/>
    <property type="evidence" value="ECO:0007669"/>
    <property type="project" value="UniProtKB-UniRule"/>
</dbReference>
<dbReference type="HAMAP" id="MF_01006">
    <property type="entry name" value="Undec_diphosphatase"/>
    <property type="match status" value="1"/>
</dbReference>
<dbReference type="InterPro" id="IPR003824">
    <property type="entry name" value="UppP"/>
</dbReference>
<dbReference type="NCBIfam" id="NF001393">
    <property type="entry name" value="PRK00281.2-4"/>
    <property type="match status" value="1"/>
</dbReference>
<dbReference type="NCBIfam" id="TIGR00753">
    <property type="entry name" value="undec_PP_bacA"/>
    <property type="match status" value="1"/>
</dbReference>
<dbReference type="PANTHER" id="PTHR30622">
    <property type="entry name" value="UNDECAPRENYL-DIPHOSPHATASE"/>
    <property type="match status" value="1"/>
</dbReference>
<dbReference type="PANTHER" id="PTHR30622:SF4">
    <property type="entry name" value="UNDECAPRENYL-DIPHOSPHATASE"/>
    <property type="match status" value="1"/>
</dbReference>
<dbReference type="Pfam" id="PF02673">
    <property type="entry name" value="BacA"/>
    <property type="match status" value="1"/>
</dbReference>
<sequence length="264" mass="28688">MDIVHIIVLSLVQGITEFLPISSSAHLVLVPKLLGWPDQGLAFDVAVHIGTLTAIVFYFKDSIFGLLRDFFVSIVRRERVGDSTLVWAVCFATIPAGIFGLAFNSLIEEYTRSGIVIAVTTIIFGVVLYLADKRVGTKSEYDVTIKLALIIGLAQALALIPGVSRSGITMSAALFLGFSRVGSANFSFLMSIPIILLAGGLESVKLIRHDISYVWSDLALAALISAVSAYICVKLFMSIISKMSMTPFVVYRLILGVFLLFIFV</sequence>
<organism>
    <name type="scientific">Campylobacter curvus (strain 525.92)</name>
    <dbReference type="NCBI Taxonomy" id="360105"/>
    <lineage>
        <taxon>Bacteria</taxon>
        <taxon>Pseudomonadati</taxon>
        <taxon>Campylobacterota</taxon>
        <taxon>Epsilonproteobacteria</taxon>
        <taxon>Campylobacterales</taxon>
        <taxon>Campylobacteraceae</taxon>
        <taxon>Campylobacter</taxon>
    </lineage>
</organism>
<evidence type="ECO:0000255" key="1">
    <source>
        <dbReference type="HAMAP-Rule" id="MF_01006"/>
    </source>
</evidence>
<accession>A7H0X7</accession>
<protein>
    <recommendedName>
        <fullName evidence="1">Undecaprenyl-diphosphatase</fullName>
        <ecNumber evidence="1">3.6.1.27</ecNumber>
    </recommendedName>
    <alternativeName>
        <fullName evidence="1">Bacitracin resistance protein</fullName>
    </alternativeName>
    <alternativeName>
        <fullName evidence="1">Undecaprenyl pyrophosphate phosphatase</fullName>
    </alternativeName>
</protein>
<name>UPPP_CAMC5</name>
<comment type="function">
    <text evidence="1">Catalyzes the dephosphorylation of undecaprenyl diphosphate (UPP). Confers resistance to bacitracin.</text>
</comment>
<comment type="catalytic activity">
    <reaction evidence="1">
        <text>di-trans,octa-cis-undecaprenyl diphosphate + H2O = di-trans,octa-cis-undecaprenyl phosphate + phosphate + H(+)</text>
        <dbReference type="Rhea" id="RHEA:28094"/>
        <dbReference type="ChEBI" id="CHEBI:15377"/>
        <dbReference type="ChEBI" id="CHEBI:15378"/>
        <dbReference type="ChEBI" id="CHEBI:43474"/>
        <dbReference type="ChEBI" id="CHEBI:58405"/>
        <dbReference type="ChEBI" id="CHEBI:60392"/>
        <dbReference type="EC" id="3.6.1.27"/>
    </reaction>
</comment>
<comment type="subcellular location">
    <subcellularLocation>
        <location evidence="1">Cell inner membrane</location>
        <topology evidence="1">Multi-pass membrane protein</topology>
    </subcellularLocation>
</comment>
<comment type="miscellaneous">
    <text>Bacitracin is thought to be involved in the inhibition of peptidoglycan synthesis by sequestering undecaprenyl diphosphate, thereby reducing the pool of lipid carrier available.</text>
</comment>
<comment type="similarity">
    <text evidence="1">Belongs to the UppP family.</text>
</comment>